<sequence>MDIIFEQALFPLFCFVLSFFIIFFTTTRPRSSRKVVPSPPGPPRLPIIGNIHLVGRNPHHSFADLSKTYGPIMSLKFGSLNTVVVTSPEAAREVLRTYDQILSSRTPTNSIRSINHDKVSVVWLPPSSSRWRLLRKLSATQLFSPQRIEATKTLRENKVKELVSFMSESSEREEAVDISRATFITALNIISNILFSVDLGNYDSNKSGVFQDTVIGVMEAVGNPDAANFFPFLGFLDLQGNRKTLKACSERLFKVFRGFIDAKLAEKSLRDTNSKDVRERDFVDVLLDLTEGDEAELNTNDIVHLLLDLFGAGTDTNSSTVEWAMAELLRNPETMVKAQAEIDCVIGQKGVVEESDISALPYLQAVVKETFRLHPAAPLLVPRKAESDVEVLGFMVPKDTQVFVNVWAIGRDPNVWENSSRFKPERFLGKDIDLRGRDYELTPFGAGRRICPGLPLAVKTVPLMLASLLYSFDWKLPNGVGSEDLDMDETFGLTLHKTNPLHAVPVKKRGRN</sequence>
<evidence type="ECO:0000250" key="1"/>
<evidence type="ECO:0000255" key="2"/>
<evidence type="ECO:0000269" key="3">
    <source>
    </source>
</evidence>
<evidence type="ECO:0000269" key="4">
    <source>
    </source>
</evidence>
<evidence type="ECO:0000305" key="5"/>
<organism>
    <name type="scientific">Arabidopsis thaliana</name>
    <name type="common">Mouse-ear cress</name>
    <dbReference type="NCBI Taxonomy" id="3702"/>
    <lineage>
        <taxon>Eukaryota</taxon>
        <taxon>Viridiplantae</taxon>
        <taxon>Streptophyta</taxon>
        <taxon>Embryophyta</taxon>
        <taxon>Tracheophyta</taxon>
        <taxon>Spermatophyta</taxon>
        <taxon>Magnoliopsida</taxon>
        <taxon>eudicotyledons</taxon>
        <taxon>Gunneridae</taxon>
        <taxon>Pentapetalae</taxon>
        <taxon>rosids</taxon>
        <taxon>malvids</taxon>
        <taxon>Brassicales</taxon>
        <taxon>Brassicaceae</taxon>
        <taxon>Camelineae</taxon>
        <taxon>Arabidopsis</taxon>
    </lineage>
</organism>
<proteinExistence type="evidence at transcript level"/>
<name>C76C2_ARATH</name>
<protein>
    <recommendedName>
        <fullName>Cytochrome P450 76C2</fullName>
        <ecNumber>1.14.-.-</ecNumber>
    </recommendedName>
    <alternativeName>
        <fullName>Protein YELLOW-LEAF-SPECIFIC GENE 6</fullName>
    </alternativeName>
</protein>
<gene>
    <name type="primary">CYP76C2</name>
    <name type="synonym">YLS6</name>
    <name type="ordered locus">At2g45570</name>
    <name type="ORF">F17K2.10</name>
</gene>
<feature type="chain" id="PRO_0000052142" description="Cytochrome P450 76C2">
    <location>
        <begin position="1"/>
        <end position="512"/>
    </location>
</feature>
<feature type="transmembrane region" description="Helical" evidence="2">
    <location>
        <begin position="3"/>
        <end position="23"/>
    </location>
</feature>
<feature type="binding site" description="axial binding residue" evidence="1">
    <location>
        <position position="451"/>
    </location>
    <ligand>
        <name>heme</name>
        <dbReference type="ChEBI" id="CHEBI:30413"/>
    </ligand>
    <ligandPart>
        <name>Fe</name>
        <dbReference type="ChEBI" id="CHEBI:18248"/>
    </ligandPart>
</feature>
<feature type="sequence conflict" description="In Ref. 4; BAB32886." evidence="5" ref="4">
    <original>P</original>
    <variation>S</variation>
    <location>
        <position position="107"/>
    </location>
</feature>
<feature type="sequence conflict" description="In Ref. 4; BAB32886." evidence="5" ref="4">
    <original>V</original>
    <variation>G</variation>
    <location>
        <position position="209"/>
    </location>
</feature>
<comment type="cofactor">
    <cofactor evidence="1">
        <name>heme</name>
        <dbReference type="ChEBI" id="CHEBI:30413"/>
    </cofactor>
</comment>
<comment type="subcellular location">
    <subcellularLocation>
        <location evidence="5">Membrane</location>
        <topology evidence="5">Single-pass membrane protein</topology>
    </subcellularLocation>
</comment>
<comment type="developmental stage">
    <text evidence="3">Up-regulated in leaves during natural senescence.</text>
</comment>
<comment type="induction">
    <text evidence="3 4">By ethylene, abscisic acid (ABA), wounding, lead, dark and infection with the bacterial pathogen P.syringae pv. tomato.</text>
</comment>
<comment type="similarity">
    <text evidence="5">Belongs to the cytochrome P450 family.</text>
</comment>
<dbReference type="EC" id="1.14.-.-"/>
<dbReference type="EMBL" id="AC003680">
    <property type="protein sequence ID" value="AAC06158.1"/>
    <property type="molecule type" value="Genomic_DNA"/>
</dbReference>
<dbReference type="EMBL" id="CP002685">
    <property type="protein sequence ID" value="AEC10572.1"/>
    <property type="molecule type" value="Genomic_DNA"/>
</dbReference>
<dbReference type="EMBL" id="AY062600">
    <property type="protein sequence ID" value="AAL32678.1"/>
    <property type="molecule type" value="mRNA"/>
</dbReference>
<dbReference type="EMBL" id="AY114660">
    <property type="protein sequence ID" value="AAM47979.1"/>
    <property type="molecule type" value="mRNA"/>
</dbReference>
<dbReference type="EMBL" id="AB047809">
    <property type="protein sequence ID" value="BAB32886.1"/>
    <property type="molecule type" value="mRNA"/>
</dbReference>
<dbReference type="PIR" id="T00870">
    <property type="entry name" value="T00870"/>
</dbReference>
<dbReference type="RefSeq" id="NP_182081.1">
    <property type="nucleotide sequence ID" value="NM_130119.4"/>
</dbReference>
<dbReference type="SMR" id="O64637"/>
<dbReference type="FunCoup" id="O64637">
    <property type="interactions" value="474"/>
</dbReference>
<dbReference type="STRING" id="3702.O64637"/>
<dbReference type="PaxDb" id="3702-AT2G45570.1"/>
<dbReference type="ProteomicsDB" id="239133"/>
<dbReference type="EnsemblPlants" id="AT2G45570.1">
    <property type="protein sequence ID" value="AT2G45570.1"/>
    <property type="gene ID" value="AT2G45570"/>
</dbReference>
<dbReference type="GeneID" id="819165"/>
<dbReference type="Gramene" id="AT2G45570.1">
    <property type="protein sequence ID" value="AT2G45570.1"/>
    <property type="gene ID" value="AT2G45570"/>
</dbReference>
<dbReference type="KEGG" id="ath:AT2G45570"/>
<dbReference type="Araport" id="AT2G45570"/>
<dbReference type="TAIR" id="AT2G45570">
    <property type="gene designation" value="CYP76C2"/>
</dbReference>
<dbReference type="eggNOG" id="KOG0156">
    <property type="taxonomic scope" value="Eukaryota"/>
</dbReference>
<dbReference type="HOGENOM" id="CLU_001570_4_2_1"/>
<dbReference type="InParanoid" id="O64637"/>
<dbReference type="OMA" id="MATIHET"/>
<dbReference type="OrthoDB" id="2789670at2759"/>
<dbReference type="PhylomeDB" id="O64637"/>
<dbReference type="BioCyc" id="ARA:AT2G45570-MONOMER"/>
<dbReference type="PRO" id="PR:O64637"/>
<dbReference type="Proteomes" id="UP000006548">
    <property type="component" value="Chromosome 2"/>
</dbReference>
<dbReference type="ExpressionAtlas" id="O64637">
    <property type="expression patterns" value="baseline and differential"/>
</dbReference>
<dbReference type="GO" id="GO:0016020">
    <property type="term" value="C:membrane"/>
    <property type="evidence" value="ECO:0007669"/>
    <property type="project" value="UniProtKB-SubCell"/>
</dbReference>
<dbReference type="GO" id="GO:0020037">
    <property type="term" value="F:heme binding"/>
    <property type="evidence" value="ECO:0007669"/>
    <property type="project" value="InterPro"/>
</dbReference>
<dbReference type="GO" id="GO:0005506">
    <property type="term" value="F:iron ion binding"/>
    <property type="evidence" value="ECO:0007669"/>
    <property type="project" value="InterPro"/>
</dbReference>
<dbReference type="GO" id="GO:0004497">
    <property type="term" value="F:monooxygenase activity"/>
    <property type="evidence" value="ECO:0007669"/>
    <property type="project" value="UniProtKB-KW"/>
</dbReference>
<dbReference type="GO" id="GO:0016705">
    <property type="term" value="F:oxidoreductase activity, acting on paired donors, with incorporation or reduction of molecular oxygen"/>
    <property type="evidence" value="ECO:0007669"/>
    <property type="project" value="InterPro"/>
</dbReference>
<dbReference type="CDD" id="cd11073">
    <property type="entry name" value="CYP76-like"/>
    <property type="match status" value="1"/>
</dbReference>
<dbReference type="FunFam" id="1.10.630.10:FF:000007">
    <property type="entry name" value="Cytochrome P450 76C4"/>
    <property type="match status" value="1"/>
</dbReference>
<dbReference type="Gene3D" id="1.10.630.10">
    <property type="entry name" value="Cytochrome P450"/>
    <property type="match status" value="1"/>
</dbReference>
<dbReference type="InterPro" id="IPR001128">
    <property type="entry name" value="Cyt_P450"/>
</dbReference>
<dbReference type="InterPro" id="IPR017972">
    <property type="entry name" value="Cyt_P450_CS"/>
</dbReference>
<dbReference type="InterPro" id="IPR002401">
    <property type="entry name" value="Cyt_P450_E_grp-I"/>
</dbReference>
<dbReference type="InterPro" id="IPR036396">
    <property type="entry name" value="Cyt_P450_sf"/>
</dbReference>
<dbReference type="PANTHER" id="PTHR47950:SF22">
    <property type="entry name" value="CYTOCHROME P450 76C1-RELATED"/>
    <property type="match status" value="1"/>
</dbReference>
<dbReference type="PANTHER" id="PTHR47950">
    <property type="entry name" value="CYTOCHROME P450, FAMILY 76, SUBFAMILY C, POLYPEPTIDE 5-RELATED"/>
    <property type="match status" value="1"/>
</dbReference>
<dbReference type="Pfam" id="PF00067">
    <property type="entry name" value="p450"/>
    <property type="match status" value="1"/>
</dbReference>
<dbReference type="PRINTS" id="PR00463">
    <property type="entry name" value="EP450I"/>
</dbReference>
<dbReference type="PRINTS" id="PR00385">
    <property type="entry name" value="P450"/>
</dbReference>
<dbReference type="SUPFAM" id="SSF48264">
    <property type="entry name" value="Cytochrome P450"/>
    <property type="match status" value="1"/>
</dbReference>
<dbReference type="PROSITE" id="PS00086">
    <property type="entry name" value="CYTOCHROME_P450"/>
    <property type="match status" value="1"/>
</dbReference>
<accession>O64637</accession>
<accession>Q9CAZ4</accession>
<keyword id="KW-0349">Heme</keyword>
<keyword id="KW-0408">Iron</keyword>
<keyword id="KW-0472">Membrane</keyword>
<keyword id="KW-0479">Metal-binding</keyword>
<keyword id="KW-0503">Monooxygenase</keyword>
<keyword id="KW-0560">Oxidoreductase</keyword>
<keyword id="KW-1185">Reference proteome</keyword>
<keyword id="KW-0812">Transmembrane</keyword>
<keyword id="KW-1133">Transmembrane helix</keyword>
<reference key="1">
    <citation type="journal article" date="1999" name="Nature">
        <title>Sequence and analysis of chromosome 2 of the plant Arabidopsis thaliana.</title>
        <authorList>
            <person name="Lin X."/>
            <person name="Kaul S."/>
            <person name="Rounsley S.D."/>
            <person name="Shea T.P."/>
            <person name="Benito M.-I."/>
            <person name="Town C.D."/>
            <person name="Fujii C.Y."/>
            <person name="Mason T.M."/>
            <person name="Bowman C.L."/>
            <person name="Barnstead M.E."/>
            <person name="Feldblyum T.V."/>
            <person name="Buell C.R."/>
            <person name="Ketchum K.A."/>
            <person name="Lee J.J."/>
            <person name="Ronning C.M."/>
            <person name="Koo H.L."/>
            <person name="Moffat K.S."/>
            <person name="Cronin L.A."/>
            <person name="Shen M."/>
            <person name="Pai G."/>
            <person name="Van Aken S."/>
            <person name="Umayam L."/>
            <person name="Tallon L.J."/>
            <person name="Gill J.E."/>
            <person name="Adams M.D."/>
            <person name="Carrera A.J."/>
            <person name="Creasy T.H."/>
            <person name="Goodman H.M."/>
            <person name="Somerville C.R."/>
            <person name="Copenhaver G.P."/>
            <person name="Preuss D."/>
            <person name="Nierman W.C."/>
            <person name="White O."/>
            <person name="Eisen J.A."/>
            <person name="Salzberg S.L."/>
            <person name="Fraser C.M."/>
            <person name="Venter J.C."/>
        </authorList>
    </citation>
    <scope>NUCLEOTIDE SEQUENCE [LARGE SCALE GENOMIC DNA]</scope>
    <source>
        <strain>cv. Columbia</strain>
    </source>
</reference>
<reference key="2">
    <citation type="journal article" date="2017" name="Plant J.">
        <title>Araport11: a complete reannotation of the Arabidopsis thaliana reference genome.</title>
        <authorList>
            <person name="Cheng C.Y."/>
            <person name="Krishnakumar V."/>
            <person name="Chan A.P."/>
            <person name="Thibaud-Nissen F."/>
            <person name="Schobel S."/>
            <person name="Town C.D."/>
        </authorList>
    </citation>
    <scope>GENOME REANNOTATION</scope>
    <source>
        <strain>cv. Columbia</strain>
    </source>
</reference>
<reference key="3">
    <citation type="journal article" date="2003" name="Science">
        <title>Empirical analysis of transcriptional activity in the Arabidopsis genome.</title>
        <authorList>
            <person name="Yamada K."/>
            <person name="Lim J."/>
            <person name="Dale J.M."/>
            <person name="Chen H."/>
            <person name="Shinn P."/>
            <person name="Palm C.J."/>
            <person name="Southwick A.M."/>
            <person name="Wu H.C."/>
            <person name="Kim C.J."/>
            <person name="Nguyen M."/>
            <person name="Pham P.K."/>
            <person name="Cheuk R.F."/>
            <person name="Karlin-Newmann G."/>
            <person name="Liu S.X."/>
            <person name="Lam B."/>
            <person name="Sakano H."/>
            <person name="Wu T."/>
            <person name="Yu G."/>
            <person name="Miranda M."/>
            <person name="Quach H.L."/>
            <person name="Tripp M."/>
            <person name="Chang C.H."/>
            <person name="Lee J.M."/>
            <person name="Toriumi M.J."/>
            <person name="Chan M.M."/>
            <person name="Tang C.C."/>
            <person name="Onodera C.S."/>
            <person name="Deng J.M."/>
            <person name="Akiyama K."/>
            <person name="Ansari Y."/>
            <person name="Arakawa T."/>
            <person name="Banh J."/>
            <person name="Banno F."/>
            <person name="Bowser L."/>
            <person name="Brooks S.Y."/>
            <person name="Carninci P."/>
            <person name="Chao Q."/>
            <person name="Choy N."/>
            <person name="Enju A."/>
            <person name="Goldsmith A.D."/>
            <person name="Gurjal M."/>
            <person name="Hansen N.F."/>
            <person name="Hayashizaki Y."/>
            <person name="Johnson-Hopson C."/>
            <person name="Hsuan V.W."/>
            <person name="Iida K."/>
            <person name="Karnes M."/>
            <person name="Khan S."/>
            <person name="Koesema E."/>
            <person name="Ishida J."/>
            <person name="Jiang P.X."/>
            <person name="Jones T."/>
            <person name="Kawai J."/>
            <person name="Kamiya A."/>
            <person name="Meyers C."/>
            <person name="Nakajima M."/>
            <person name="Narusaka M."/>
            <person name="Seki M."/>
            <person name="Sakurai T."/>
            <person name="Satou M."/>
            <person name="Tamse R."/>
            <person name="Vaysberg M."/>
            <person name="Wallender E.K."/>
            <person name="Wong C."/>
            <person name="Yamamura Y."/>
            <person name="Yuan S."/>
            <person name="Shinozaki K."/>
            <person name="Davis R.W."/>
            <person name="Theologis A."/>
            <person name="Ecker J.R."/>
        </authorList>
    </citation>
    <scope>NUCLEOTIDE SEQUENCE [LARGE SCALE MRNA]</scope>
    <source>
        <strain>cv. Columbia</strain>
    </source>
</reference>
<reference key="4">
    <citation type="journal article" date="2001" name="Plant Cell Physiol.">
        <title>Isolation and RNA gel blot analysis of genes that could serve as potential molecular markers for leaf senescence in Arabidopsis thaliana.</title>
        <authorList>
            <person name="Yoshida S."/>
            <person name="Ito M."/>
            <person name="Nishida I."/>
            <person name="Watanabe A."/>
        </authorList>
    </citation>
    <scope>NUCLEOTIDE SEQUENCE [MRNA] OF 59-232</scope>
    <scope>DEVELOPMENTAL STAGE</scope>
    <scope>INDUCTION</scope>
</reference>
<reference key="5">
    <citation type="journal article" date="1998" name="FEBS Lett.">
        <title>CYP76C2, an Arabidopsis thaliana cytochrome P450 gene expressed during hypersensitive and developmental cell death.</title>
        <authorList>
            <person name="Godiard L."/>
            <person name="Sauviac L."/>
            <person name="Dalbin N."/>
            <person name="Liaubet L."/>
            <person name="Callard D."/>
            <person name="Czernic P."/>
            <person name="Marco Y."/>
        </authorList>
    </citation>
    <scope>INDUCTION</scope>
</reference>